<name>AAXA_CHLMU</name>
<feature type="signal peptide" evidence="2">
    <location>
        <begin position="1"/>
        <end position="22"/>
    </location>
</feature>
<feature type="chain" id="PRO_0000363183" description="Porin AaxA">
    <location>
        <begin position="23"/>
        <end position="461"/>
    </location>
</feature>
<accession>Q9PK22</accession>
<proteinExistence type="inferred from homology"/>
<reference key="1">
    <citation type="journal article" date="2000" name="Nucleic Acids Res.">
        <title>Genome sequences of Chlamydia trachomatis MoPn and Chlamydia pneumoniae AR39.</title>
        <authorList>
            <person name="Read T.D."/>
            <person name="Brunham R.C."/>
            <person name="Shen C."/>
            <person name="Gill S.R."/>
            <person name="Heidelberg J.F."/>
            <person name="White O."/>
            <person name="Hickey E.K."/>
            <person name="Peterson J.D."/>
            <person name="Utterback T.R."/>
            <person name="Berry K.J."/>
            <person name="Bass S."/>
            <person name="Linher K.D."/>
            <person name="Weidman J.F."/>
            <person name="Khouri H.M."/>
            <person name="Craven B."/>
            <person name="Bowman C."/>
            <person name="Dodson R.J."/>
            <person name="Gwinn M.L."/>
            <person name="Nelson W.C."/>
            <person name="DeBoy R.T."/>
            <person name="Kolonay J.F."/>
            <person name="McClarty G."/>
            <person name="Salzberg S.L."/>
            <person name="Eisen J.A."/>
            <person name="Fraser C.M."/>
        </authorList>
    </citation>
    <scope>NUCLEOTIDE SEQUENCE [LARGE SCALE GENOMIC DNA]</scope>
    <source>
        <strain>MoPn / Nigg</strain>
    </source>
</reference>
<dbReference type="EMBL" id="AE002160">
    <property type="protein sequence ID" value="AAF39477.1"/>
    <property type="status" value="ALT_INIT"/>
    <property type="molecule type" value="Genomic_DNA"/>
</dbReference>
<dbReference type="PIR" id="A81680">
    <property type="entry name" value="A81680"/>
</dbReference>
<dbReference type="SMR" id="Q9PK22"/>
<dbReference type="KEGG" id="cmu:TC_0651"/>
<dbReference type="eggNOG" id="COG3659">
    <property type="taxonomic scope" value="Bacteria"/>
</dbReference>
<dbReference type="HOGENOM" id="CLU_619231_0_0_0"/>
<dbReference type="Proteomes" id="UP000000800">
    <property type="component" value="Chromosome"/>
</dbReference>
<dbReference type="GO" id="GO:0009279">
    <property type="term" value="C:cell outer membrane"/>
    <property type="evidence" value="ECO:0007669"/>
    <property type="project" value="UniProtKB-SubCell"/>
</dbReference>
<dbReference type="GO" id="GO:0046930">
    <property type="term" value="C:pore complex"/>
    <property type="evidence" value="ECO:0007669"/>
    <property type="project" value="UniProtKB-KW"/>
</dbReference>
<dbReference type="GO" id="GO:0015288">
    <property type="term" value="F:porin activity"/>
    <property type="evidence" value="ECO:0007669"/>
    <property type="project" value="UniProtKB-KW"/>
</dbReference>
<dbReference type="GO" id="GO:0006865">
    <property type="term" value="P:amino acid transport"/>
    <property type="evidence" value="ECO:0007669"/>
    <property type="project" value="UniProtKB-KW"/>
</dbReference>
<dbReference type="GO" id="GO:0008643">
    <property type="term" value="P:carbohydrate transport"/>
    <property type="evidence" value="ECO:0007669"/>
    <property type="project" value="InterPro"/>
</dbReference>
<dbReference type="GO" id="GO:0006811">
    <property type="term" value="P:monoatomic ion transport"/>
    <property type="evidence" value="ECO:0007669"/>
    <property type="project" value="UniProtKB-KW"/>
</dbReference>
<dbReference type="Gene3D" id="2.40.160.180">
    <property type="entry name" value="Carbohydrate-selective porin OprB"/>
    <property type="match status" value="1"/>
</dbReference>
<dbReference type="InterPro" id="IPR007049">
    <property type="entry name" value="Carb-sel_porin_OprB"/>
</dbReference>
<dbReference type="InterPro" id="IPR038673">
    <property type="entry name" value="OprB_sf"/>
</dbReference>
<dbReference type="Pfam" id="PF04966">
    <property type="entry name" value="OprB"/>
    <property type="match status" value="1"/>
</dbReference>
<comment type="function">
    <text evidence="1">Facilitates L-arginine uptake, as part of the AaxABC system. The arginine uptake by the bacterium in the macrophage may be a virulence factor against the host innate immune response (By similarity).</text>
</comment>
<comment type="subcellular location">
    <subcellularLocation>
        <location evidence="1">Cell outer membrane</location>
        <topology evidence="1">Multi-pass membrane protein</topology>
    </subcellularLocation>
</comment>
<comment type="similarity">
    <text evidence="3">Belongs to the OprB family.</text>
</comment>
<comment type="sequence caution" evidence="3">
    <conflict type="erroneous initiation">
        <sequence resource="EMBL-CDS" id="AAF39477"/>
    </conflict>
</comment>
<evidence type="ECO:0000250" key="1"/>
<evidence type="ECO:0000255" key="2"/>
<evidence type="ECO:0000305" key="3"/>
<sequence>MSFRSILLTALLSLSFTNTMQAAHHHYHRYDDKLRRQYHKKDLPTQENVRKEFCNPYSHSSDPIPLSQQRGVLSPICDLVSECSFLNGISVRSLKQTLKNSAGTQVALDWSILPQWFNPRSSWAPKLSIRDLGYGKPQSLIEADSPCCQTCFNPSAAITIYDSSCGKGVVQVSYTLVRYWRETAALAGQTMMLAGSINDYPARQNIFSQLTFSQTFPNERVNLTVGQYSLYSIDGTLYNNDQQLGFISYALSQNPTATYSSGSLGAYLQVAPTESTCLQVGFQDAYNISGSSIKWNNLTKNKYNFHGYASWAPHCCLGPGQYSVLLYVTRKVPEQMMQTMGWSVNASQYISSKLYVFGRYSGVTGQLSPINRTYSFGLVSPNLLNRNPQDLFGVACAFNNIHASAFQNAQRKYETVIEGFATIGCGPYISFAPDFQLYLYPALRPNKQSARVYSVRANLAI</sequence>
<keyword id="KW-0029">Amino-acid transport</keyword>
<keyword id="KW-0998">Cell outer membrane</keyword>
<keyword id="KW-0406">Ion transport</keyword>
<keyword id="KW-0472">Membrane</keyword>
<keyword id="KW-0626">Porin</keyword>
<keyword id="KW-0732">Signal</keyword>
<keyword id="KW-0812">Transmembrane</keyword>
<keyword id="KW-1134">Transmembrane beta strand</keyword>
<keyword id="KW-0813">Transport</keyword>
<keyword id="KW-0843">Virulence</keyword>
<gene>
    <name type="primary">aaxA</name>
    <name type="ordered locus">TC_0651</name>
</gene>
<organism>
    <name type="scientific">Chlamydia muridarum (strain MoPn / Nigg)</name>
    <dbReference type="NCBI Taxonomy" id="243161"/>
    <lineage>
        <taxon>Bacteria</taxon>
        <taxon>Pseudomonadati</taxon>
        <taxon>Chlamydiota</taxon>
        <taxon>Chlamydiia</taxon>
        <taxon>Chlamydiales</taxon>
        <taxon>Chlamydiaceae</taxon>
        <taxon>Chlamydia/Chlamydophila group</taxon>
        <taxon>Chlamydia</taxon>
    </lineage>
</organism>
<protein>
    <recommendedName>
        <fullName>Porin AaxA</fullName>
    </recommendedName>
    <alternativeName>
        <fullName>Outer membrane protein AaxA</fullName>
    </alternativeName>
</protein>